<feature type="chain" id="PRO_0000344811" description="Ribonuclease Y">
    <location>
        <begin position="1"/>
        <end position="528"/>
    </location>
</feature>
<feature type="transmembrane region" description="Helical" evidence="1">
    <location>
        <begin position="15"/>
        <end position="35"/>
    </location>
</feature>
<feature type="domain" description="KH" evidence="1">
    <location>
        <begin position="217"/>
        <end position="277"/>
    </location>
</feature>
<feature type="domain" description="HD" evidence="2">
    <location>
        <begin position="343"/>
        <end position="436"/>
    </location>
</feature>
<evidence type="ECO:0000255" key="1">
    <source>
        <dbReference type="HAMAP-Rule" id="MF_00335"/>
    </source>
</evidence>
<evidence type="ECO:0000255" key="2">
    <source>
        <dbReference type="PROSITE-ProRule" id="PRU01175"/>
    </source>
</evidence>
<keyword id="KW-1003">Cell membrane</keyword>
<keyword id="KW-0255">Endonuclease</keyword>
<keyword id="KW-0378">Hydrolase</keyword>
<keyword id="KW-0472">Membrane</keyword>
<keyword id="KW-0540">Nuclease</keyword>
<keyword id="KW-0694">RNA-binding</keyword>
<keyword id="KW-0812">Transmembrane</keyword>
<keyword id="KW-1133">Transmembrane helix</keyword>
<protein>
    <recommendedName>
        <fullName evidence="1">Ribonuclease Y</fullName>
        <shortName evidence="1">RNase Y</shortName>
        <ecNumber evidence="1">3.1.-.-</ecNumber>
    </recommendedName>
</protein>
<name>RNY_AYWBP</name>
<reference key="1">
    <citation type="journal article" date="2006" name="J. Bacteriol.">
        <title>Living with genome instability: the adaptation of phytoplasmas to diverse environments of their insect and plant hosts.</title>
        <authorList>
            <person name="Bai X."/>
            <person name="Zhang J."/>
            <person name="Ewing A."/>
            <person name="Miller S.A."/>
            <person name="Jancso Radek A."/>
            <person name="Shevchenko D.V."/>
            <person name="Tsukerman K."/>
            <person name="Walunas T."/>
            <person name="Lapidus A."/>
            <person name="Campbell J.W."/>
            <person name="Hogenhout S.A."/>
        </authorList>
    </citation>
    <scope>NUCLEOTIDE SEQUENCE [LARGE SCALE GENOMIC DNA]</scope>
    <source>
        <strain>AYWB</strain>
    </source>
</reference>
<organism>
    <name type="scientific">Aster yellows witches'-broom phytoplasma (strain AYWB)</name>
    <dbReference type="NCBI Taxonomy" id="322098"/>
    <lineage>
        <taxon>Bacteria</taxon>
        <taxon>Bacillati</taxon>
        <taxon>Mycoplasmatota</taxon>
        <taxon>Mollicutes</taxon>
        <taxon>Acholeplasmatales</taxon>
        <taxon>Acholeplasmataceae</taxon>
        <taxon>Candidatus Phytoplasma</taxon>
        <taxon>16SrI (Aster yellows group)</taxon>
    </lineage>
</organism>
<proteinExistence type="inferred from homology"/>
<accession>Q2NJ28</accession>
<sequence>MKDASWRDHCTMGCSLFFLALICGSIIGYFLYSFFNQKKLEEKKQAFDNKLKEKEKDLQKREQEMMRNAKIEIASLRQKLELDLEQRTNTIVDLESKNNRREELLNNRTESLNKREEHLDSEKQIISHTKKNLEQQIKEQETILNTQKQQLEKIASLTQDQARQIIMKETRDQTTYEMMSYIKQEEEKAKSEASKKAKTLLVLAMQKYSGDITGEKNISVVNIPNEDMKGRIIGRQGRNIKSLEVLTGVDLIIDESPCTVILSSFDPIRREIAKKTLEFLVSDGRIHPSRIEKALETSTIEVDNFIKEMGEEATFITKIGEVHPDLIKILGKLHFRISYSQNVLKHSLEVAFLAGKLASEIGENEILARRAGLFHDIGKALDHEMEGSHVEIGVSIASKYKEKKEVIDAIASHHEDQEPQSIIAALVAIADTLSSARPGARKESVENYIQRLTKLETIANSTKGVAKSYAIQAGREIRVIVEPDKIADNFIFQTARTIKEQIEKEIIYNGVIKVTVLRETRAVEMAKL</sequence>
<dbReference type="EC" id="3.1.-.-" evidence="1"/>
<dbReference type="EMBL" id="CP000061">
    <property type="protein sequence ID" value="ABC65565.1"/>
    <property type="molecule type" value="Genomic_DNA"/>
</dbReference>
<dbReference type="SMR" id="Q2NJ28"/>
<dbReference type="STRING" id="322098.AYWB_448"/>
<dbReference type="KEGG" id="ayw:AYWB_448"/>
<dbReference type="eggNOG" id="COG1418">
    <property type="taxonomic scope" value="Bacteria"/>
</dbReference>
<dbReference type="HOGENOM" id="CLU_028328_1_0_14"/>
<dbReference type="OrthoDB" id="9803205at2"/>
<dbReference type="PhylomeDB" id="Q2NJ28"/>
<dbReference type="Proteomes" id="UP000001934">
    <property type="component" value="Chromosome"/>
</dbReference>
<dbReference type="GO" id="GO:0005886">
    <property type="term" value="C:plasma membrane"/>
    <property type="evidence" value="ECO:0007669"/>
    <property type="project" value="UniProtKB-SubCell"/>
</dbReference>
<dbReference type="GO" id="GO:0003723">
    <property type="term" value="F:RNA binding"/>
    <property type="evidence" value="ECO:0007669"/>
    <property type="project" value="UniProtKB-UniRule"/>
</dbReference>
<dbReference type="GO" id="GO:0004521">
    <property type="term" value="F:RNA endonuclease activity"/>
    <property type="evidence" value="ECO:0007669"/>
    <property type="project" value="UniProtKB-UniRule"/>
</dbReference>
<dbReference type="GO" id="GO:0006402">
    <property type="term" value="P:mRNA catabolic process"/>
    <property type="evidence" value="ECO:0007669"/>
    <property type="project" value="UniProtKB-UniRule"/>
</dbReference>
<dbReference type="CDD" id="cd00077">
    <property type="entry name" value="HDc"/>
    <property type="match status" value="1"/>
</dbReference>
<dbReference type="CDD" id="cd22431">
    <property type="entry name" value="KH-I_RNaseY"/>
    <property type="match status" value="1"/>
</dbReference>
<dbReference type="Gene3D" id="1.10.3210.10">
    <property type="entry name" value="Hypothetical protein af1432"/>
    <property type="match status" value="1"/>
</dbReference>
<dbReference type="Gene3D" id="3.30.1370.10">
    <property type="entry name" value="K Homology domain, type 1"/>
    <property type="match status" value="1"/>
</dbReference>
<dbReference type="HAMAP" id="MF_00335">
    <property type="entry name" value="RNase_Y"/>
    <property type="match status" value="1"/>
</dbReference>
<dbReference type="InterPro" id="IPR003607">
    <property type="entry name" value="HD/PDEase_dom"/>
</dbReference>
<dbReference type="InterPro" id="IPR006674">
    <property type="entry name" value="HD_domain"/>
</dbReference>
<dbReference type="InterPro" id="IPR006675">
    <property type="entry name" value="HDIG_dom"/>
</dbReference>
<dbReference type="InterPro" id="IPR004087">
    <property type="entry name" value="KH_dom"/>
</dbReference>
<dbReference type="InterPro" id="IPR004088">
    <property type="entry name" value="KH_dom_type_1"/>
</dbReference>
<dbReference type="InterPro" id="IPR036612">
    <property type="entry name" value="KH_dom_type_1_sf"/>
</dbReference>
<dbReference type="InterPro" id="IPR017705">
    <property type="entry name" value="Ribonuclease_Y"/>
</dbReference>
<dbReference type="InterPro" id="IPR022711">
    <property type="entry name" value="RNase_Y_N"/>
</dbReference>
<dbReference type="NCBIfam" id="TIGR00277">
    <property type="entry name" value="HDIG"/>
    <property type="match status" value="1"/>
</dbReference>
<dbReference type="NCBIfam" id="TIGR03319">
    <property type="entry name" value="RNase_Y"/>
    <property type="match status" value="1"/>
</dbReference>
<dbReference type="PANTHER" id="PTHR12826">
    <property type="entry name" value="RIBONUCLEASE Y"/>
    <property type="match status" value="1"/>
</dbReference>
<dbReference type="PANTHER" id="PTHR12826:SF15">
    <property type="entry name" value="RIBONUCLEASE Y"/>
    <property type="match status" value="1"/>
</dbReference>
<dbReference type="Pfam" id="PF01966">
    <property type="entry name" value="HD"/>
    <property type="match status" value="1"/>
</dbReference>
<dbReference type="Pfam" id="PF00013">
    <property type="entry name" value="KH_1"/>
    <property type="match status" value="1"/>
</dbReference>
<dbReference type="Pfam" id="PF12072">
    <property type="entry name" value="RNase_Y_N"/>
    <property type="match status" value="1"/>
</dbReference>
<dbReference type="SMART" id="SM00471">
    <property type="entry name" value="HDc"/>
    <property type="match status" value="1"/>
</dbReference>
<dbReference type="SMART" id="SM00322">
    <property type="entry name" value="KH"/>
    <property type="match status" value="1"/>
</dbReference>
<dbReference type="SUPFAM" id="SSF54791">
    <property type="entry name" value="Eukaryotic type KH-domain (KH-domain type I)"/>
    <property type="match status" value="1"/>
</dbReference>
<dbReference type="SUPFAM" id="SSF109604">
    <property type="entry name" value="HD-domain/PDEase-like"/>
    <property type="match status" value="1"/>
</dbReference>
<dbReference type="PROSITE" id="PS51831">
    <property type="entry name" value="HD"/>
    <property type="match status" value="1"/>
</dbReference>
<dbReference type="PROSITE" id="PS50084">
    <property type="entry name" value="KH_TYPE_1"/>
    <property type="match status" value="1"/>
</dbReference>
<comment type="function">
    <text evidence="1">Endoribonuclease that initiates mRNA decay.</text>
</comment>
<comment type="subcellular location">
    <subcellularLocation>
        <location evidence="1">Cell membrane</location>
        <topology evidence="1">Single-pass membrane protein</topology>
    </subcellularLocation>
</comment>
<comment type="similarity">
    <text evidence="1">Belongs to the RNase Y family.</text>
</comment>
<gene>
    <name evidence="1" type="primary">rny</name>
    <name type="ordered locus">AYWB_448</name>
</gene>